<comment type="function">
    <text evidence="1">Involved in unsaturated fatty acids biosynthesis. Catalyzes the dehydration of short chain beta-hydroxyacyl-ACPs and long chain saturated and unsaturated beta-hydroxyacyl-ACPs.</text>
</comment>
<comment type="catalytic activity">
    <reaction evidence="1">
        <text>a (3R)-hydroxyacyl-[ACP] = a (2E)-enoyl-[ACP] + H2O</text>
        <dbReference type="Rhea" id="RHEA:13097"/>
        <dbReference type="Rhea" id="RHEA-COMP:9925"/>
        <dbReference type="Rhea" id="RHEA-COMP:9945"/>
        <dbReference type="ChEBI" id="CHEBI:15377"/>
        <dbReference type="ChEBI" id="CHEBI:78784"/>
        <dbReference type="ChEBI" id="CHEBI:78827"/>
        <dbReference type="EC" id="4.2.1.59"/>
    </reaction>
</comment>
<comment type="subcellular location">
    <subcellularLocation>
        <location evidence="1">Cytoplasm</location>
    </subcellularLocation>
</comment>
<comment type="similarity">
    <text evidence="1">Belongs to the thioester dehydratase family. FabZ subfamily.</text>
</comment>
<gene>
    <name evidence="1" type="primary">fabZ</name>
    <name type="ordered locus">NE1708</name>
</gene>
<name>FABZ_NITEU</name>
<keyword id="KW-0963">Cytoplasm</keyword>
<keyword id="KW-0441">Lipid A biosynthesis</keyword>
<keyword id="KW-0444">Lipid biosynthesis</keyword>
<keyword id="KW-0443">Lipid metabolism</keyword>
<keyword id="KW-0456">Lyase</keyword>
<keyword id="KW-1185">Reference proteome</keyword>
<organism>
    <name type="scientific">Nitrosomonas europaea (strain ATCC 19718 / CIP 103999 / KCTC 2705 / NBRC 14298)</name>
    <dbReference type="NCBI Taxonomy" id="228410"/>
    <lineage>
        <taxon>Bacteria</taxon>
        <taxon>Pseudomonadati</taxon>
        <taxon>Pseudomonadota</taxon>
        <taxon>Betaproteobacteria</taxon>
        <taxon>Nitrosomonadales</taxon>
        <taxon>Nitrosomonadaceae</taxon>
        <taxon>Nitrosomonas</taxon>
    </lineage>
</organism>
<sequence length="153" mass="17258">MKQGDRQTVMDIHEILKYLPHRYPLILVDRVVSLESGKRIHAYKNVSINEPYFSGHFPHHPVMPGVLIIEALAQAAALLTIRSENMEKDNGQVYYFVGIDAVRFKKPVIAGDQLVLKVEITRQLKGIWKYAACAEVDGQVVTEAQLMCTARAI</sequence>
<accession>Q82U05</accession>
<feature type="chain" id="PRO_0000091704" description="3-hydroxyacyl-[acyl-carrier-protein] dehydratase FabZ">
    <location>
        <begin position="1"/>
        <end position="153"/>
    </location>
</feature>
<feature type="active site" evidence="1">
    <location>
        <position position="56"/>
    </location>
</feature>
<proteinExistence type="inferred from homology"/>
<dbReference type="EC" id="4.2.1.59" evidence="1"/>
<dbReference type="EMBL" id="AL954747">
    <property type="protein sequence ID" value="CAD85619.1"/>
    <property type="molecule type" value="Genomic_DNA"/>
</dbReference>
<dbReference type="RefSeq" id="WP_011112262.1">
    <property type="nucleotide sequence ID" value="NC_004757.1"/>
</dbReference>
<dbReference type="SMR" id="Q82U05"/>
<dbReference type="STRING" id="228410.NE1708"/>
<dbReference type="GeneID" id="87104868"/>
<dbReference type="KEGG" id="neu:NE1708"/>
<dbReference type="eggNOG" id="COG0764">
    <property type="taxonomic scope" value="Bacteria"/>
</dbReference>
<dbReference type="HOGENOM" id="CLU_078912_1_2_4"/>
<dbReference type="OrthoDB" id="9772788at2"/>
<dbReference type="PhylomeDB" id="Q82U05"/>
<dbReference type="Proteomes" id="UP000001416">
    <property type="component" value="Chromosome"/>
</dbReference>
<dbReference type="GO" id="GO:0005737">
    <property type="term" value="C:cytoplasm"/>
    <property type="evidence" value="ECO:0007669"/>
    <property type="project" value="UniProtKB-SubCell"/>
</dbReference>
<dbReference type="GO" id="GO:0016020">
    <property type="term" value="C:membrane"/>
    <property type="evidence" value="ECO:0007669"/>
    <property type="project" value="GOC"/>
</dbReference>
<dbReference type="GO" id="GO:0019171">
    <property type="term" value="F:(3R)-hydroxyacyl-[acyl-carrier-protein] dehydratase activity"/>
    <property type="evidence" value="ECO:0007669"/>
    <property type="project" value="UniProtKB-EC"/>
</dbReference>
<dbReference type="GO" id="GO:0006633">
    <property type="term" value="P:fatty acid biosynthetic process"/>
    <property type="evidence" value="ECO:0007669"/>
    <property type="project" value="UniProtKB-UniRule"/>
</dbReference>
<dbReference type="GO" id="GO:0009245">
    <property type="term" value="P:lipid A biosynthetic process"/>
    <property type="evidence" value="ECO:0007669"/>
    <property type="project" value="UniProtKB-UniRule"/>
</dbReference>
<dbReference type="CDD" id="cd01288">
    <property type="entry name" value="FabZ"/>
    <property type="match status" value="1"/>
</dbReference>
<dbReference type="FunFam" id="3.10.129.10:FF:000001">
    <property type="entry name" value="3-hydroxyacyl-[acyl-carrier-protein] dehydratase FabZ"/>
    <property type="match status" value="1"/>
</dbReference>
<dbReference type="Gene3D" id="3.10.129.10">
    <property type="entry name" value="Hotdog Thioesterase"/>
    <property type="match status" value="1"/>
</dbReference>
<dbReference type="HAMAP" id="MF_00406">
    <property type="entry name" value="FabZ"/>
    <property type="match status" value="1"/>
</dbReference>
<dbReference type="InterPro" id="IPR013114">
    <property type="entry name" value="FabA_FabZ"/>
</dbReference>
<dbReference type="InterPro" id="IPR010084">
    <property type="entry name" value="FabZ"/>
</dbReference>
<dbReference type="InterPro" id="IPR029069">
    <property type="entry name" value="HotDog_dom_sf"/>
</dbReference>
<dbReference type="NCBIfam" id="TIGR01750">
    <property type="entry name" value="fabZ"/>
    <property type="match status" value="1"/>
</dbReference>
<dbReference type="NCBIfam" id="NF000582">
    <property type="entry name" value="PRK00006.1"/>
    <property type="match status" value="1"/>
</dbReference>
<dbReference type="PANTHER" id="PTHR30272">
    <property type="entry name" value="3-HYDROXYACYL-[ACYL-CARRIER-PROTEIN] DEHYDRATASE"/>
    <property type="match status" value="1"/>
</dbReference>
<dbReference type="PANTHER" id="PTHR30272:SF1">
    <property type="entry name" value="3-HYDROXYACYL-[ACYL-CARRIER-PROTEIN] DEHYDRATASE"/>
    <property type="match status" value="1"/>
</dbReference>
<dbReference type="Pfam" id="PF07977">
    <property type="entry name" value="FabA"/>
    <property type="match status" value="1"/>
</dbReference>
<dbReference type="SUPFAM" id="SSF54637">
    <property type="entry name" value="Thioesterase/thiol ester dehydrase-isomerase"/>
    <property type="match status" value="1"/>
</dbReference>
<protein>
    <recommendedName>
        <fullName evidence="1">3-hydroxyacyl-[acyl-carrier-protein] dehydratase FabZ</fullName>
        <ecNumber evidence="1">4.2.1.59</ecNumber>
    </recommendedName>
    <alternativeName>
        <fullName evidence="1">(3R)-hydroxymyristoyl-[acyl-carrier-protein] dehydratase</fullName>
        <shortName evidence="1">(3R)-hydroxymyristoyl-ACP dehydrase</shortName>
    </alternativeName>
    <alternativeName>
        <fullName evidence="1">Beta-hydroxyacyl-ACP dehydratase</fullName>
    </alternativeName>
</protein>
<evidence type="ECO:0000255" key="1">
    <source>
        <dbReference type="HAMAP-Rule" id="MF_00406"/>
    </source>
</evidence>
<reference key="1">
    <citation type="journal article" date="2003" name="J. Bacteriol.">
        <title>Complete genome sequence of the ammonia-oxidizing bacterium and obligate chemolithoautotroph Nitrosomonas europaea.</title>
        <authorList>
            <person name="Chain P."/>
            <person name="Lamerdin J.E."/>
            <person name="Larimer F.W."/>
            <person name="Regala W."/>
            <person name="Lao V."/>
            <person name="Land M.L."/>
            <person name="Hauser L."/>
            <person name="Hooper A.B."/>
            <person name="Klotz M.G."/>
            <person name="Norton J."/>
            <person name="Sayavedra-Soto L.A."/>
            <person name="Arciero D.M."/>
            <person name="Hommes N.G."/>
            <person name="Whittaker M.M."/>
            <person name="Arp D.J."/>
        </authorList>
    </citation>
    <scope>NUCLEOTIDE SEQUENCE [LARGE SCALE GENOMIC DNA]</scope>
    <source>
        <strain>ATCC 19718 / CIP 103999 / KCTC 2705 / NBRC 14298</strain>
    </source>
</reference>